<accession>Q45758</accession>
<evidence type="ECO:0000305" key="1"/>
<keyword id="KW-0903">Direct protein sequencing</keyword>
<keyword id="KW-0749">Sporulation</keyword>
<keyword id="KW-0800">Toxin</keyword>
<keyword id="KW-0843">Virulence</keyword>
<protein>
    <recommendedName>
        <fullName>Pesticidal crystal protein Cry6Ba</fullName>
    </recommendedName>
    <alternativeName>
        <fullName>Crystaline entomocidal protoxin</fullName>
        <shortName>Crystal protein</shortName>
    </alternativeName>
    <alternativeName>
        <fullName>Insecticidal delta-endotoxin CryVIB(a)</fullName>
    </alternativeName>
</protein>
<proteinExistence type="evidence at protein level"/>
<gene>
    <name type="primary">cry6Ba</name>
    <name type="synonym">cryVIb</name>
    <name type="synonym">cryVIB(a)</name>
</gene>
<dbReference type="EMBL" id="L07024">
    <property type="protein sequence ID" value="AAA22358.1"/>
    <property type="molecule type" value="Genomic_DNA"/>
</dbReference>
<dbReference type="SMR" id="Q45758"/>
<dbReference type="GO" id="GO:0090729">
    <property type="term" value="F:toxin activity"/>
    <property type="evidence" value="ECO:0007669"/>
    <property type="project" value="UniProtKB-KW"/>
</dbReference>
<dbReference type="GO" id="GO:0030435">
    <property type="term" value="P:sporulation resulting in formation of a cellular spore"/>
    <property type="evidence" value="ECO:0007669"/>
    <property type="project" value="UniProtKB-KW"/>
</dbReference>
<dbReference type="CDD" id="cd22656">
    <property type="entry name" value="ClyA_Cry6Aa-like"/>
    <property type="match status" value="1"/>
</dbReference>
<dbReference type="Gene3D" id="1.20.1170.10">
    <property type="match status" value="1"/>
</dbReference>
<dbReference type="NCBIfam" id="NF033928">
    <property type="entry name" value="alph_xenorhab_A"/>
    <property type="match status" value="1"/>
</dbReference>
<dbReference type="SUPFAM" id="SSF58100">
    <property type="entry name" value="Bacterial hemolysins"/>
    <property type="match status" value="1"/>
</dbReference>
<name>CR6BA_BACTU</name>
<sequence>MILGNGKTLPKHIRLAHIFATQNSSAKKDNPLGPEGMVTKDGFIISKEEWAFVQAYVTTGTGLPINDDEMRRHVGLPSRIQIPDDFNQLYKVYNEDKHLCSWWNGFLFPLVLKTANDISAYGFKCAGKGATKGYYEVMQDDVENISDNGYDKVAQEKAHKDLQARCKILIKEADQYKAAADDVSKHLNTFLKGGQDSDGNDVIGVEAVQVQLAQVKDNLDGLYGDKSPRHEELLKKVDDLKKELEAAIKAENELEKKVKMSFALGPLLGFVVYEILELTAVKSIHKKVEALQAELDTANDELDRDVKILGMMNSIDTDIDNMLEQGEQALVVFRKIAGIWSVISLNIGNLRETSLKEIEEENDDDALYIELGDAAGQWKEIAEEAQSFVLNAYTP</sequence>
<organism>
    <name type="scientific">Bacillus thuringiensis</name>
    <dbReference type="NCBI Taxonomy" id="1428"/>
    <lineage>
        <taxon>Bacteria</taxon>
        <taxon>Bacillati</taxon>
        <taxon>Bacillota</taxon>
        <taxon>Bacilli</taxon>
        <taxon>Bacillales</taxon>
        <taxon>Bacillaceae</taxon>
        <taxon>Bacillus</taxon>
        <taxon>Bacillus cereus group</taxon>
    </lineage>
</organism>
<comment type="function">
    <text>Endotoxin with nematicidal activity.</text>
</comment>
<comment type="developmental stage">
    <text>The crystal protein is produced during sporulation and is accumulated both as an inclusion and as part of the spore coat.</text>
</comment>
<comment type="similarity">
    <text evidence="1">Belongs to the cry6A endotoxin family.</text>
</comment>
<feature type="chain" id="PRO_0000174071" description="Pesticidal crystal protein Cry6Ba">
    <location>
        <begin position="1"/>
        <end position="395" status="greater than"/>
    </location>
</feature>
<feature type="non-terminal residue">
    <location>
        <position position="395"/>
    </location>
</feature>
<reference key="1">
    <citation type="patent" date="1991-12-27" number="EP0462721">
        <title>Novel Bacillus thuringiensis microbes active against nematodes, and genes encoding novel nematode-active toxins cloned from Bacillus thuringiensis isolates.</title>
        <authorList>
            <person name="Narva K.E."/>
            <person name="Payne J.M."/>
            <person name="Schwab G.E."/>
            <person name="Hickle L.A."/>
            <person name="Galasan T."/>
            <person name="Sick A.J."/>
        </authorList>
    </citation>
    <scope>NUCLEOTIDE SEQUENCE [GENOMIC DNA]</scope>
    <scope>PROTEIN SEQUENCE OF 1-24</scope>
    <source>
        <strain>NRRL B-18247 / PS69D1</strain>
    </source>
</reference>